<accession>Q9KQ06</accession>
<accession>Q9XCL5</accession>
<sequence>MTAITISDQEYRDFCRFLESQCGIVLGDSKQYLVRSRLSPLVTKFKLSSLSDLLRDVVTGRNRDLRVAAVDAMTTNETLWFRDSYPFTVLADKLLPEMAANKRPIKIWSAASSSGQEPYSMAMTILEVQQKRPGLLPSVSITATDISASMLDMCRAGIYDNLALGRGLSPERRRVFFEDAGDGRMKVKDNVKRLVNFRPQNLMESYSLLGKFDIIFCRNVLIYFSPDMKSKVLNQMAASLNPGGYLLLGASESLTGLTDKFEMVRCNPGIIYKLK</sequence>
<organism>
    <name type="scientific">Vibrio cholerae serotype O1 (strain ATCC 39315 / El Tor Inaba N16961)</name>
    <dbReference type="NCBI Taxonomy" id="243277"/>
    <lineage>
        <taxon>Bacteria</taxon>
        <taxon>Pseudomonadati</taxon>
        <taxon>Pseudomonadota</taxon>
        <taxon>Gammaproteobacteria</taxon>
        <taxon>Vibrionales</taxon>
        <taxon>Vibrionaceae</taxon>
        <taxon>Vibrio</taxon>
    </lineage>
</organism>
<gene>
    <name type="primary">cheR1</name>
    <name type="synonym">cheR</name>
    <name type="ordered locus">VC_2201</name>
</gene>
<comment type="function">
    <text evidence="1">Methylation of the membrane-bound methyl-accepting chemotaxis proteins (MCP) to form gamma-glutamyl methyl ester residues in MCP.</text>
</comment>
<comment type="catalytic activity">
    <reaction>
        <text>L-glutamyl-[protein] + S-adenosyl-L-methionine = [protein]-L-glutamate 5-O-methyl ester + S-adenosyl-L-homocysteine</text>
        <dbReference type="Rhea" id="RHEA:24452"/>
        <dbReference type="Rhea" id="RHEA-COMP:10208"/>
        <dbReference type="Rhea" id="RHEA-COMP:10311"/>
        <dbReference type="ChEBI" id="CHEBI:29973"/>
        <dbReference type="ChEBI" id="CHEBI:57856"/>
        <dbReference type="ChEBI" id="CHEBI:59789"/>
        <dbReference type="ChEBI" id="CHEBI:82795"/>
        <dbReference type="EC" id="2.1.1.80"/>
    </reaction>
</comment>
<evidence type="ECO:0000250" key="1"/>
<evidence type="ECO:0000255" key="2">
    <source>
        <dbReference type="PROSITE-ProRule" id="PRU00051"/>
    </source>
</evidence>
<reference key="1">
    <citation type="journal article" date="2000" name="Nature">
        <title>DNA sequence of both chromosomes of the cholera pathogen Vibrio cholerae.</title>
        <authorList>
            <person name="Heidelberg J.F."/>
            <person name="Eisen J.A."/>
            <person name="Nelson W.C."/>
            <person name="Clayton R.A."/>
            <person name="Gwinn M.L."/>
            <person name="Dodson R.J."/>
            <person name="Haft D.H."/>
            <person name="Hickey E.K."/>
            <person name="Peterson J.D."/>
            <person name="Umayam L.A."/>
            <person name="Gill S.R."/>
            <person name="Nelson K.E."/>
            <person name="Read T.D."/>
            <person name="Tettelin H."/>
            <person name="Richardson D.L."/>
            <person name="Ermolaeva M.D."/>
            <person name="Vamathevan J.J."/>
            <person name="Bass S."/>
            <person name="Qin H."/>
            <person name="Dragoi I."/>
            <person name="Sellers P."/>
            <person name="McDonald L.A."/>
            <person name="Utterback T.R."/>
            <person name="Fleischmann R.D."/>
            <person name="Nierman W.C."/>
            <person name="White O."/>
            <person name="Salzberg S.L."/>
            <person name="Smith H.O."/>
            <person name="Colwell R.R."/>
            <person name="Mekalanos J.J."/>
            <person name="Venter J.C."/>
            <person name="Fraser C.M."/>
        </authorList>
    </citation>
    <scope>NUCLEOTIDE SEQUENCE [LARGE SCALE GENOMIC DNA]</scope>
    <source>
        <strain>ATCC 39315 / El Tor Inaba N16961</strain>
    </source>
</reference>
<reference key="2">
    <citation type="journal article" date="1999" name="J. Bacteriol.">
        <title>The chemotactic response of Vibrio anguillarum to fish intestinal mucus is mediated by a combination of multiple mucus components.</title>
        <authorList>
            <person name="O'Toole R."/>
            <person name="Lundberg S."/>
            <person name="Fredriksson S.A."/>
            <person name="Jansson A."/>
            <person name="Nilsson B."/>
            <person name="Wolf-Watz H."/>
        </authorList>
    </citation>
    <scope>NUCLEOTIDE SEQUENCE [GENOMIC DNA] OF 10-266</scope>
    <source>
        <strain>CVD110</strain>
    </source>
</reference>
<protein>
    <recommendedName>
        <fullName>Chemotaxis protein methyltransferase 1</fullName>
        <ecNumber>2.1.1.80</ecNumber>
    </recommendedName>
</protein>
<keyword id="KW-0489">Methyltransferase</keyword>
<keyword id="KW-1185">Reference proteome</keyword>
<keyword id="KW-0949">S-adenosyl-L-methionine</keyword>
<keyword id="KW-0808">Transferase</keyword>
<proteinExistence type="inferred from homology"/>
<dbReference type="EC" id="2.1.1.80"/>
<dbReference type="EMBL" id="AE003852">
    <property type="protein sequence ID" value="AAF95346.1"/>
    <property type="molecule type" value="Genomic_DNA"/>
</dbReference>
<dbReference type="EMBL" id="AF139167">
    <property type="protein sequence ID" value="AAD45254.1"/>
    <property type="molecule type" value="Genomic_DNA"/>
</dbReference>
<dbReference type="PIR" id="H82106">
    <property type="entry name" value="H82106"/>
</dbReference>
<dbReference type="RefSeq" id="NP_231832.1">
    <property type="nucleotide sequence ID" value="NC_002505.1"/>
</dbReference>
<dbReference type="RefSeq" id="WP_000125387.1">
    <property type="nucleotide sequence ID" value="NZ_LT906614.1"/>
</dbReference>
<dbReference type="SMR" id="Q9KQ06"/>
<dbReference type="STRING" id="243277.VC_2201"/>
<dbReference type="DNASU" id="2613241"/>
<dbReference type="EnsemblBacteria" id="AAF95346">
    <property type="protein sequence ID" value="AAF95346"/>
    <property type="gene ID" value="VC_2201"/>
</dbReference>
<dbReference type="KEGG" id="vch:VC_2201"/>
<dbReference type="PATRIC" id="fig|243277.26.peg.2098"/>
<dbReference type="eggNOG" id="COG1352">
    <property type="taxonomic scope" value="Bacteria"/>
</dbReference>
<dbReference type="HOGENOM" id="CLU_025854_0_2_6"/>
<dbReference type="Proteomes" id="UP000000584">
    <property type="component" value="Chromosome 1"/>
</dbReference>
<dbReference type="GO" id="GO:0008276">
    <property type="term" value="F:protein methyltransferase activity"/>
    <property type="evidence" value="ECO:0000318"/>
    <property type="project" value="GO_Central"/>
</dbReference>
<dbReference type="GO" id="GO:0008983">
    <property type="term" value="F:protein-glutamate O-methyltransferase activity"/>
    <property type="evidence" value="ECO:0007669"/>
    <property type="project" value="UniProtKB-EC"/>
</dbReference>
<dbReference type="GO" id="GO:0032259">
    <property type="term" value="P:methylation"/>
    <property type="evidence" value="ECO:0007669"/>
    <property type="project" value="UniProtKB-KW"/>
</dbReference>
<dbReference type="CDD" id="cd02440">
    <property type="entry name" value="AdoMet_MTases"/>
    <property type="match status" value="1"/>
</dbReference>
<dbReference type="FunFam" id="1.10.155.10:FF:000001">
    <property type="entry name" value="Chemotaxis methyltransferase CheR"/>
    <property type="match status" value="1"/>
</dbReference>
<dbReference type="FunFam" id="3.40.50.150:FF:000175">
    <property type="entry name" value="Chemotaxis methyltransferase CheR"/>
    <property type="match status" value="1"/>
</dbReference>
<dbReference type="Gene3D" id="1.10.155.10">
    <property type="entry name" value="Chemotaxis receptor methyltransferase CheR, N-terminal domain"/>
    <property type="match status" value="1"/>
</dbReference>
<dbReference type="Gene3D" id="3.40.50.150">
    <property type="entry name" value="Vaccinia Virus protein VP39"/>
    <property type="match status" value="1"/>
</dbReference>
<dbReference type="InterPro" id="IPR050903">
    <property type="entry name" value="Bact_Chemotaxis_MeTrfase"/>
</dbReference>
<dbReference type="InterPro" id="IPR022642">
    <property type="entry name" value="CheR_C"/>
</dbReference>
<dbReference type="InterPro" id="IPR000780">
    <property type="entry name" value="CheR_MeTrfase"/>
</dbReference>
<dbReference type="InterPro" id="IPR022641">
    <property type="entry name" value="CheR_N"/>
</dbReference>
<dbReference type="InterPro" id="IPR036804">
    <property type="entry name" value="CheR_N_sf"/>
</dbReference>
<dbReference type="InterPro" id="IPR029063">
    <property type="entry name" value="SAM-dependent_MTases_sf"/>
</dbReference>
<dbReference type="PANTHER" id="PTHR24422">
    <property type="entry name" value="CHEMOTAXIS PROTEIN METHYLTRANSFERASE"/>
    <property type="match status" value="1"/>
</dbReference>
<dbReference type="PANTHER" id="PTHR24422:SF21">
    <property type="entry name" value="CHEMOTAXIS PROTEIN METHYLTRANSFERASE 1"/>
    <property type="match status" value="1"/>
</dbReference>
<dbReference type="Pfam" id="PF01739">
    <property type="entry name" value="CheR"/>
    <property type="match status" value="1"/>
</dbReference>
<dbReference type="Pfam" id="PF03705">
    <property type="entry name" value="CheR_N"/>
    <property type="match status" value="1"/>
</dbReference>
<dbReference type="PRINTS" id="PR00996">
    <property type="entry name" value="CHERMTFRASE"/>
</dbReference>
<dbReference type="SMART" id="SM00138">
    <property type="entry name" value="MeTrc"/>
    <property type="match status" value="1"/>
</dbReference>
<dbReference type="SUPFAM" id="SSF47757">
    <property type="entry name" value="Chemotaxis receptor methyltransferase CheR, N-terminal domain"/>
    <property type="match status" value="1"/>
</dbReference>
<dbReference type="SUPFAM" id="SSF53335">
    <property type="entry name" value="S-adenosyl-L-methionine-dependent methyltransferases"/>
    <property type="match status" value="1"/>
</dbReference>
<dbReference type="PROSITE" id="PS50123">
    <property type="entry name" value="CHER"/>
    <property type="match status" value="1"/>
</dbReference>
<feature type="chain" id="PRO_0000176042" description="Chemotaxis protein methyltransferase 1">
    <location>
        <begin position="1"/>
        <end position="275"/>
    </location>
</feature>
<feature type="domain" description="CheR-type methyltransferase" evidence="2">
    <location>
        <begin position="1"/>
        <end position="275"/>
    </location>
</feature>
<feature type="binding site" evidence="1">
    <location>
        <position position="76"/>
    </location>
    <ligand>
        <name>S-adenosyl-L-methionine</name>
        <dbReference type="ChEBI" id="CHEBI:59789"/>
    </ligand>
</feature>
<feature type="binding site" evidence="1">
    <location>
        <position position="78"/>
    </location>
    <ligand>
        <name>S-adenosyl-L-methionine</name>
        <dbReference type="ChEBI" id="CHEBI:59789"/>
    </ligand>
</feature>
<feature type="binding site" evidence="1">
    <location>
        <position position="82"/>
    </location>
    <ligand>
        <name>S-adenosyl-L-methionine</name>
        <dbReference type="ChEBI" id="CHEBI:59789"/>
    </ligand>
</feature>
<feature type="binding site" evidence="1">
    <location>
        <position position="117"/>
    </location>
    <ligand>
        <name>S-adenosyl-L-methionine</name>
        <dbReference type="ChEBI" id="CHEBI:59789"/>
    </ligand>
</feature>
<feature type="binding site" evidence="1">
    <location>
        <position position="145"/>
    </location>
    <ligand>
        <name>S-adenosyl-L-methionine</name>
        <dbReference type="ChEBI" id="CHEBI:59789"/>
    </ligand>
</feature>
<feature type="binding site" evidence="1">
    <location>
        <begin position="201"/>
        <end position="202"/>
    </location>
    <ligand>
        <name>S-adenosyl-L-methionine</name>
        <dbReference type="ChEBI" id="CHEBI:59789"/>
    </ligand>
</feature>
<feature type="binding site" evidence="1">
    <location>
        <begin position="218"/>
        <end position="219"/>
    </location>
    <ligand>
        <name>S-adenosyl-L-methionine</name>
        <dbReference type="ChEBI" id="CHEBI:59789"/>
    </ligand>
</feature>
<name>CHER1_VIBCH</name>